<accession>Q4WNC9</accession>
<gene>
    <name type="ORF">AFUA_6G06800</name>
</gene>
<keyword id="KW-0325">Glycoprotein</keyword>
<keyword id="KW-0378">Hydrolase</keyword>
<keyword id="KW-0479">Metal-binding</keyword>
<keyword id="KW-0645">Protease</keyword>
<keyword id="KW-1185">Reference proteome</keyword>
<keyword id="KW-0964">Secreted</keyword>
<keyword id="KW-0732">Signal</keyword>
<keyword id="KW-0862">Zinc</keyword>
<feature type="signal peptide" evidence="2">
    <location>
        <begin position="1"/>
        <end position="16"/>
    </location>
</feature>
<feature type="chain" id="PRO_0000411230" description="Probable carboxypeptidase AFUA_6G06800">
    <location>
        <begin position="17"/>
        <end position="440"/>
    </location>
</feature>
<feature type="active site" description="Proton acceptor" evidence="1">
    <location>
        <position position="197"/>
    </location>
</feature>
<feature type="binding site" evidence="1">
    <location>
        <position position="165"/>
    </location>
    <ligand>
        <name>Zn(2+)</name>
        <dbReference type="ChEBI" id="CHEBI:29105"/>
        <label>1</label>
    </ligand>
</feature>
<feature type="binding site" evidence="1">
    <location>
        <position position="165"/>
    </location>
    <ligand>
        <name>Zn(2+)</name>
        <dbReference type="ChEBI" id="CHEBI:29105"/>
        <label>2</label>
    </ligand>
</feature>
<feature type="binding site" evidence="1">
    <location>
        <position position="198"/>
    </location>
    <ligand>
        <name>Zn(2+)</name>
        <dbReference type="ChEBI" id="CHEBI:29105"/>
        <label>1</label>
    </ligand>
</feature>
<feature type="glycosylation site" description="N-linked (GlcNAc...) asparagine" evidence="2">
    <location>
        <position position="87"/>
    </location>
</feature>
<feature type="glycosylation site" description="N-linked (GlcNAc...) asparagine" evidence="2">
    <location>
        <position position="149"/>
    </location>
</feature>
<feature type="glycosylation site" description="N-linked (GlcNAc...) asparagine" evidence="2">
    <location>
        <position position="353"/>
    </location>
</feature>
<feature type="glycosylation site" description="N-linked (GlcNAc...) asparagine" evidence="2">
    <location>
        <position position="372"/>
    </location>
</feature>
<name>P20D1_ASPFU</name>
<protein>
    <recommendedName>
        <fullName>Probable carboxypeptidase AFUA_6G06800</fullName>
        <ecNumber>3.4.17.-</ecNumber>
    </recommendedName>
    <alternativeName>
        <fullName>Peptidase M20 domain-containing protein AFUA_6G06800</fullName>
    </alternativeName>
</protein>
<comment type="cofactor">
    <cofactor evidence="1">
        <name>Zn(2+)</name>
        <dbReference type="ChEBI" id="CHEBI:29105"/>
    </cofactor>
    <text evidence="1">Binds 2 Zn(2+) ions per subunit.</text>
</comment>
<comment type="subcellular location">
    <subcellularLocation>
        <location evidence="3">Secreted</location>
    </subcellularLocation>
</comment>
<comment type="similarity">
    <text evidence="3">Belongs to the peptidase M20A family.</text>
</comment>
<dbReference type="EC" id="3.4.17.-"/>
<dbReference type="EMBL" id="AAHF01000006">
    <property type="protein sequence ID" value="EAL88535.1"/>
    <property type="molecule type" value="Genomic_DNA"/>
</dbReference>
<dbReference type="RefSeq" id="XP_750573.1">
    <property type="nucleotide sequence ID" value="XM_745480.1"/>
</dbReference>
<dbReference type="SMR" id="Q4WNC9"/>
<dbReference type="STRING" id="330879.Q4WNC9"/>
<dbReference type="EnsemblFungi" id="EAL88535">
    <property type="protein sequence ID" value="EAL88535"/>
    <property type="gene ID" value="AFUA_6G06800"/>
</dbReference>
<dbReference type="GeneID" id="3508779"/>
<dbReference type="KEGG" id="afm:AFUA_6G06800"/>
<dbReference type="VEuPathDB" id="FungiDB:Afu6g06800"/>
<dbReference type="eggNOG" id="KOG2275">
    <property type="taxonomic scope" value="Eukaryota"/>
</dbReference>
<dbReference type="HOGENOM" id="CLU_021802_3_0_1"/>
<dbReference type="InParanoid" id="Q4WNC9"/>
<dbReference type="OMA" id="RLHKGVM"/>
<dbReference type="OrthoDB" id="3064516at2759"/>
<dbReference type="Proteomes" id="UP000002530">
    <property type="component" value="Chromosome 6"/>
</dbReference>
<dbReference type="GO" id="GO:0005576">
    <property type="term" value="C:extracellular region"/>
    <property type="evidence" value="ECO:0007669"/>
    <property type="project" value="UniProtKB-SubCell"/>
</dbReference>
<dbReference type="GO" id="GO:0046872">
    <property type="term" value="F:metal ion binding"/>
    <property type="evidence" value="ECO:0007669"/>
    <property type="project" value="UniProtKB-KW"/>
</dbReference>
<dbReference type="GO" id="GO:0008233">
    <property type="term" value="F:peptidase activity"/>
    <property type="evidence" value="ECO:0007669"/>
    <property type="project" value="UniProtKB-KW"/>
</dbReference>
<dbReference type="GO" id="GO:0006508">
    <property type="term" value="P:proteolysis"/>
    <property type="evidence" value="ECO:0007669"/>
    <property type="project" value="UniProtKB-KW"/>
</dbReference>
<dbReference type="CDD" id="cd05652">
    <property type="entry name" value="M20_ArgE_DapE-like_fungal"/>
    <property type="match status" value="1"/>
</dbReference>
<dbReference type="Gene3D" id="3.30.70.360">
    <property type="match status" value="1"/>
</dbReference>
<dbReference type="Gene3D" id="3.40.630.10">
    <property type="entry name" value="Zn peptidases"/>
    <property type="match status" value="1"/>
</dbReference>
<dbReference type="InterPro" id="IPR001261">
    <property type="entry name" value="ArgE/DapE_CS"/>
</dbReference>
<dbReference type="InterPro" id="IPR036264">
    <property type="entry name" value="Bact_exopeptidase_dim_dom"/>
</dbReference>
<dbReference type="InterPro" id="IPR002933">
    <property type="entry name" value="Peptidase_M20"/>
</dbReference>
<dbReference type="InterPro" id="IPR011650">
    <property type="entry name" value="Peptidase_M20_dimer"/>
</dbReference>
<dbReference type="InterPro" id="IPR050072">
    <property type="entry name" value="Peptidase_M20A"/>
</dbReference>
<dbReference type="PANTHER" id="PTHR43808">
    <property type="entry name" value="ACETYLORNITHINE DEACETYLASE"/>
    <property type="match status" value="1"/>
</dbReference>
<dbReference type="PANTHER" id="PTHR43808:SF8">
    <property type="entry name" value="PEPTIDASE M20 DIMERISATION DOMAIN-CONTAINING PROTEIN"/>
    <property type="match status" value="1"/>
</dbReference>
<dbReference type="Pfam" id="PF07687">
    <property type="entry name" value="M20_dimer"/>
    <property type="match status" value="1"/>
</dbReference>
<dbReference type="Pfam" id="PF01546">
    <property type="entry name" value="Peptidase_M20"/>
    <property type="match status" value="1"/>
</dbReference>
<dbReference type="SUPFAM" id="SSF55031">
    <property type="entry name" value="Bacterial exopeptidase dimerisation domain"/>
    <property type="match status" value="1"/>
</dbReference>
<dbReference type="SUPFAM" id="SSF53187">
    <property type="entry name" value="Zn-dependent exopeptidases"/>
    <property type="match status" value="1"/>
</dbReference>
<dbReference type="PROSITE" id="PS00758">
    <property type="entry name" value="ARGE_DAPE_CPG2_1"/>
    <property type="match status" value="1"/>
</dbReference>
<dbReference type="PROSITE" id="PS00759">
    <property type="entry name" value="ARGE_DAPE_CPG2_2"/>
    <property type="match status" value="1"/>
</dbReference>
<reference key="1">
    <citation type="journal article" date="2005" name="Nature">
        <title>Genomic sequence of the pathogenic and allergenic filamentous fungus Aspergillus fumigatus.</title>
        <authorList>
            <person name="Nierman W.C."/>
            <person name="Pain A."/>
            <person name="Anderson M.J."/>
            <person name="Wortman J.R."/>
            <person name="Kim H.S."/>
            <person name="Arroyo J."/>
            <person name="Berriman M."/>
            <person name="Abe K."/>
            <person name="Archer D.B."/>
            <person name="Bermejo C."/>
            <person name="Bennett J.W."/>
            <person name="Bowyer P."/>
            <person name="Chen D."/>
            <person name="Collins M."/>
            <person name="Coulsen R."/>
            <person name="Davies R."/>
            <person name="Dyer P.S."/>
            <person name="Farman M.L."/>
            <person name="Fedorova N."/>
            <person name="Fedorova N.D."/>
            <person name="Feldblyum T.V."/>
            <person name="Fischer R."/>
            <person name="Fosker N."/>
            <person name="Fraser A."/>
            <person name="Garcia J.L."/>
            <person name="Garcia M.J."/>
            <person name="Goble A."/>
            <person name="Goldman G.H."/>
            <person name="Gomi K."/>
            <person name="Griffith-Jones S."/>
            <person name="Gwilliam R."/>
            <person name="Haas B.J."/>
            <person name="Haas H."/>
            <person name="Harris D.E."/>
            <person name="Horiuchi H."/>
            <person name="Huang J."/>
            <person name="Humphray S."/>
            <person name="Jimenez J."/>
            <person name="Keller N."/>
            <person name="Khouri H."/>
            <person name="Kitamoto K."/>
            <person name="Kobayashi T."/>
            <person name="Konzack S."/>
            <person name="Kulkarni R."/>
            <person name="Kumagai T."/>
            <person name="Lafton A."/>
            <person name="Latge J.-P."/>
            <person name="Li W."/>
            <person name="Lord A."/>
            <person name="Lu C."/>
            <person name="Majoros W.H."/>
            <person name="May G.S."/>
            <person name="Miller B.L."/>
            <person name="Mohamoud Y."/>
            <person name="Molina M."/>
            <person name="Monod M."/>
            <person name="Mouyna I."/>
            <person name="Mulligan S."/>
            <person name="Murphy L.D."/>
            <person name="O'Neil S."/>
            <person name="Paulsen I."/>
            <person name="Penalva M.A."/>
            <person name="Pertea M."/>
            <person name="Price C."/>
            <person name="Pritchard B.L."/>
            <person name="Quail M.A."/>
            <person name="Rabbinowitsch E."/>
            <person name="Rawlins N."/>
            <person name="Rajandream M.A."/>
            <person name="Reichard U."/>
            <person name="Renauld H."/>
            <person name="Robson G.D."/>
            <person name="Rodriguez de Cordoba S."/>
            <person name="Rodriguez-Pena J.M."/>
            <person name="Ronning C.M."/>
            <person name="Rutter S."/>
            <person name="Salzberg S.L."/>
            <person name="Sanchez M."/>
            <person name="Sanchez-Ferrero J.C."/>
            <person name="Saunders D."/>
            <person name="Seeger K."/>
            <person name="Squares R."/>
            <person name="Squares S."/>
            <person name="Takeuchi M."/>
            <person name="Tekaia F."/>
            <person name="Turner G."/>
            <person name="Vazquez de Aldana C.R."/>
            <person name="Weidman J."/>
            <person name="White O."/>
            <person name="Woodward J.R."/>
            <person name="Yu J.-H."/>
            <person name="Fraser C.M."/>
            <person name="Galagan J.E."/>
            <person name="Asai K."/>
            <person name="Machida M."/>
            <person name="Hall N."/>
            <person name="Barrell B.G."/>
            <person name="Denning D.W."/>
        </authorList>
    </citation>
    <scope>NUCLEOTIDE SEQUENCE [LARGE SCALE GENOMIC DNA]</scope>
    <source>
        <strain>ATCC MYA-4609 / CBS 101355 / FGSC A1100 / Af293</strain>
    </source>
</reference>
<proteinExistence type="inferred from homology"/>
<organism>
    <name type="scientific">Aspergillus fumigatus (strain ATCC MYA-4609 / CBS 101355 / FGSC A1100 / Af293)</name>
    <name type="common">Neosartorya fumigata</name>
    <dbReference type="NCBI Taxonomy" id="330879"/>
    <lineage>
        <taxon>Eukaryota</taxon>
        <taxon>Fungi</taxon>
        <taxon>Dikarya</taxon>
        <taxon>Ascomycota</taxon>
        <taxon>Pezizomycotina</taxon>
        <taxon>Eurotiomycetes</taxon>
        <taxon>Eurotiomycetidae</taxon>
        <taxon>Eurotiales</taxon>
        <taxon>Aspergillaceae</taxon>
        <taxon>Aspergillus</taxon>
        <taxon>Aspergillus subgen. Fumigati</taxon>
    </lineage>
</organism>
<sequence>MKPLTSLLLSAALSAAAPHPASPQAPLADIPSIVGETRTEFSQNSLDDVVNASPLLSFHRDLVSIESISGNEGAAGAFVADFLASHNFTVIKQPVTTESDARFNIFAIPESQYHSLDESHSSHSPQILLTSHIDTVPPFIPYSLHRDANDTDDRNILIAGRGTVDAKGSVAAQIFAALDILAAQPSAPLGLLFVVGEETGGDGMKAFSQSTHLNPSPSRFHTVIFGEPTELALVAGHKGMLGFEVAAHGHAAHSGYPWLGESAISAILPALARVDQLGDIPVEEGGLPASDKYGRTTVNIGRMEGGVATNVVPSKARAGVAVRLAAGTHDEAREVVLKAVRDVTGGDDRVVVNFSLEGYGPQDLDTDVPGFNITTVNYGTDVPNLQLHPRPDGKVRRYLYGPGTIHVAHGDNEALTVAQLEEAVRGYKKLIQAALDRSAS</sequence>
<evidence type="ECO:0000250" key="1"/>
<evidence type="ECO:0000255" key="2"/>
<evidence type="ECO:0000305" key="3"/>